<name>PRL65_SCHPO</name>
<keyword id="KW-1185">Reference proteome</keyword>
<gene>
    <name evidence="4" type="primary">prl65</name>
    <name evidence="4" type="ORF">SPAC19A8.16</name>
</gene>
<dbReference type="EMBL" id="CU329670">
    <property type="protein sequence ID" value="CCD31319.1"/>
    <property type="molecule type" value="Genomic_DNA"/>
</dbReference>
<dbReference type="RefSeq" id="XP_004001774.1">
    <property type="nucleotide sequence ID" value="XM_004001725.1"/>
</dbReference>
<dbReference type="SMR" id="G2TRL4"/>
<dbReference type="PaxDb" id="4896-SPAC19A8.16.1"/>
<dbReference type="EnsemblFungi" id="SPAC19A8.16.1">
    <property type="protein sequence ID" value="SPAC19A8.16.1:pep"/>
    <property type="gene ID" value="SPAC19A8.16"/>
</dbReference>
<dbReference type="PomBase" id="SPAC19A8.16">
    <property type="gene designation" value="prl65"/>
</dbReference>
<dbReference type="VEuPathDB" id="FungiDB:SPAC19A8.16"/>
<dbReference type="HOGENOM" id="CLU_172686_2_0_1"/>
<dbReference type="InParanoid" id="G2TRL4"/>
<dbReference type="OMA" id="MPQYRNG"/>
<dbReference type="PRO" id="PR:G2TRL4"/>
<dbReference type="Proteomes" id="UP000002485">
    <property type="component" value="Chromosome I"/>
</dbReference>
<feature type="chain" id="PRO_0000416665" description="Putative primary metabolism protein prl65">
    <location>
        <begin position="1"/>
        <end position="65"/>
    </location>
</feature>
<feature type="region of interest" description="Disordered" evidence="2">
    <location>
        <begin position="1"/>
        <end position="25"/>
    </location>
</feature>
<comment type="function">
    <text evidence="1">May play a role in primary metabolism.</text>
</comment>
<protein>
    <recommendedName>
        <fullName evidence="3">Putative primary metabolism protein prl65</fullName>
    </recommendedName>
</protein>
<organism>
    <name type="scientific">Schizosaccharomyces pombe (strain 972 / ATCC 24843)</name>
    <name type="common">Fission yeast</name>
    <dbReference type="NCBI Taxonomy" id="284812"/>
    <lineage>
        <taxon>Eukaryota</taxon>
        <taxon>Fungi</taxon>
        <taxon>Dikarya</taxon>
        <taxon>Ascomycota</taxon>
        <taxon>Taphrinomycotina</taxon>
        <taxon>Schizosaccharomycetes</taxon>
        <taxon>Schizosaccharomycetales</taxon>
        <taxon>Schizosaccharomycetaceae</taxon>
        <taxon>Schizosaccharomyces</taxon>
    </lineage>
</organism>
<reference key="1">
    <citation type="journal article" date="2002" name="Nature">
        <title>The genome sequence of Schizosaccharomyces pombe.</title>
        <authorList>
            <person name="Wood V."/>
            <person name="Gwilliam R."/>
            <person name="Rajandream M.A."/>
            <person name="Lyne M.H."/>
            <person name="Lyne R."/>
            <person name="Stewart A."/>
            <person name="Sgouros J.G."/>
            <person name="Peat N."/>
            <person name="Hayles J."/>
            <person name="Baker S.G."/>
            <person name="Basham D."/>
            <person name="Bowman S."/>
            <person name="Brooks K."/>
            <person name="Brown D."/>
            <person name="Brown S."/>
            <person name="Chillingworth T."/>
            <person name="Churcher C.M."/>
            <person name="Collins M."/>
            <person name="Connor R."/>
            <person name="Cronin A."/>
            <person name="Davis P."/>
            <person name="Feltwell T."/>
            <person name="Fraser A."/>
            <person name="Gentles S."/>
            <person name="Goble A."/>
            <person name="Hamlin N."/>
            <person name="Harris D.E."/>
            <person name="Hidalgo J."/>
            <person name="Hodgson G."/>
            <person name="Holroyd S."/>
            <person name="Hornsby T."/>
            <person name="Howarth S."/>
            <person name="Huckle E.J."/>
            <person name="Hunt S."/>
            <person name="Jagels K."/>
            <person name="James K.D."/>
            <person name="Jones L."/>
            <person name="Jones M."/>
            <person name="Leather S."/>
            <person name="McDonald S."/>
            <person name="McLean J."/>
            <person name="Mooney P."/>
            <person name="Moule S."/>
            <person name="Mungall K.L."/>
            <person name="Murphy L.D."/>
            <person name="Niblett D."/>
            <person name="Odell C."/>
            <person name="Oliver K."/>
            <person name="O'Neil S."/>
            <person name="Pearson D."/>
            <person name="Quail M.A."/>
            <person name="Rabbinowitsch E."/>
            <person name="Rutherford K.M."/>
            <person name="Rutter S."/>
            <person name="Saunders D."/>
            <person name="Seeger K."/>
            <person name="Sharp S."/>
            <person name="Skelton J."/>
            <person name="Simmonds M.N."/>
            <person name="Squares R."/>
            <person name="Squares S."/>
            <person name="Stevens K."/>
            <person name="Taylor K."/>
            <person name="Taylor R.G."/>
            <person name="Tivey A."/>
            <person name="Walsh S.V."/>
            <person name="Warren T."/>
            <person name="Whitehead S."/>
            <person name="Woodward J.R."/>
            <person name="Volckaert G."/>
            <person name="Aert R."/>
            <person name="Robben J."/>
            <person name="Grymonprez B."/>
            <person name="Weltjens I."/>
            <person name="Vanstreels E."/>
            <person name="Rieger M."/>
            <person name="Schaefer M."/>
            <person name="Mueller-Auer S."/>
            <person name="Gabel C."/>
            <person name="Fuchs M."/>
            <person name="Duesterhoeft A."/>
            <person name="Fritzc C."/>
            <person name="Holzer E."/>
            <person name="Moestl D."/>
            <person name="Hilbert H."/>
            <person name="Borzym K."/>
            <person name="Langer I."/>
            <person name="Beck A."/>
            <person name="Lehrach H."/>
            <person name="Reinhardt R."/>
            <person name="Pohl T.M."/>
            <person name="Eger P."/>
            <person name="Zimmermann W."/>
            <person name="Wedler H."/>
            <person name="Wambutt R."/>
            <person name="Purnelle B."/>
            <person name="Goffeau A."/>
            <person name="Cadieu E."/>
            <person name="Dreano S."/>
            <person name="Gloux S."/>
            <person name="Lelaure V."/>
            <person name="Mottier S."/>
            <person name="Galibert F."/>
            <person name="Aves S.J."/>
            <person name="Xiang Z."/>
            <person name="Hunt C."/>
            <person name="Moore K."/>
            <person name="Hurst S.M."/>
            <person name="Lucas M."/>
            <person name="Rochet M."/>
            <person name="Gaillardin C."/>
            <person name="Tallada V.A."/>
            <person name="Garzon A."/>
            <person name="Thode G."/>
            <person name="Daga R.R."/>
            <person name="Cruzado L."/>
            <person name="Jimenez J."/>
            <person name="Sanchez M."/>
            <person name="del Rey F."/>
            <person name="Benito J."/>
            <person name="Dominguez A."/>
            <person name="Revuelta J.L."/>
            <person name="Moreno S."/>
            <person name="Armstrong J."/>
            <person name="Forsburg S.L."/>
            <person name="Cerutti L."/>
            <person name="Lowe T."/>
            <person name="McCombie W.R."/>
            <person name="Paulsen I."/>
            <person name="Potashkin J."/>
            <person name="Shpakovski G.V."/>
            <person name="Ussery D."/>
            <person name="Barrell B.G."/>
            <person name="Nurse P."/>
        </authorList>
    </citation>
    <scope>NUCLEOTIDE SEQUENCE [LARGE SCALE GENOMIC DNA]</scope>
    <source>
        <strain>972 / ATCC 24843</strain>
    </source>
</reference>
<reference key="2">
    <citation type="journal article" date="2011" name="Science">
        <title>Comparative functional genomics of the fission yeasts.</title>
        <authorList>
            <person name="Rhind N."/>
            <person name="Chen Z."/>
            <person name="Yassour M."/>
            <person name="Thompson D.A."/>
            <person name="Haas B.J."/>
            <person name="Habib N."/>
            <person name="Wapinski I."/>
            <person name="Roy S."/>
            <person name="Lin M.F."/>
            <person name="Heiman D.I."/>
            <person name="Young S.K."/>
            <person name="Furuya K."/>
            <person name="Guo Y."/>
            <person name="Pidoux A."/>
            <person name="Chen H.M."/>
            <person name="Robbertse B."/>
            <person name="Goldberg J.M."/>
            <person name="Aoki K."/>
            <person name="Bayne E.H."/>
            <person name="Berlin A.M."/>
            <person name="Desjardins C.A."/>
            <person name="Dobbs E."/>
            <person name="Dukaj L."/>
            <person name="Fan L."/>
            <person name="FitzGerald M.G."/>
            <person name="French C."/>
            <person name="Gujja S."/>
            <person name="Hansen K."/>
            <person name="Keifenheim D."/>
            <person name="Levin J.Z."/>
            <person name="Mosher R.A."/>
            <person name="Mueller C.A."/>
            <person name="Pfiffner J."/>
            <person name="Priest M."/>
            <person name="Russ C."/>
            <person name="Smialowska A."/>
            <person name="Swoboda P."/>
            <person name="Sykes S.M."/>
            <person name="Vaughn M."/>
            <person name="Vengrova S."/>
            <person name="Yoder R."/>
            <person name="Zeng Q."/>
            <person name="Allshire R."/>
            <person name="Baulcombe D."/>
            <person name="Birren B.W."/>
            <person name="Brown W."/>
            <person name="Ekwall K."/>
            <person name="Kellis M."/>
            <person name="Leatherwood J."/>
            <person name="Levin H."/>
            <person name="Margalit H."/>
            <person name="Martienssen R."/>
            <person name="Nieduszynski C.A."/>
            <person name="Spatafora J.W."/>
            <person name="Friedman N."/>
            <person name="Dalgaard J.Z."/>
            <person name="Baumann P."/>
            <person name="Niki H."/>
            <person name="Regev A."/>
            <person name="Nusbaum C."/>
        </authorList>
    </citation>
    <scope>IDENTIFICATION</scope>
</reference>
<sequence length="65" mass="7186">MTKYSKGNKVEYHPIGGPSGTSTSTGVIQQVIKNDSGEETRYEILNDHTGKAATYKERNISRILD</sequence>
<accession>G2TRL4</accession>
<evidence type="ECO:0000250" key="1">
    <source>
        <dbReference type="UniProtKB" id="J9VKY2"/>
    </source>
</evidence>
<evidence type="ECO:0000256" key="2">
    <source>
        <dbReference type="SAM" id="MobiDB-lite"/>
    </source>
</evidence>
<evidence type="ECO:0000305" key="3"/>
<evidence type="ECO:0000312" key="4">
    <source>
        <dbReference type="PomBase" id="SPAC19A8.16"/>
    </source>
</evidence>
<proteinExistence type="inferred from homology"/>